<protein>
    <recommendedName>
        <fullName>Probable oxidoreductase YyaE</fullName>
        <ecNumber>1.-.-.-</ecNumber>
    </recommendedName>
</protein>
<accession>P37519</accession>
<name>YYAE_BACSU</name>
<evidence type="ECO:0000250" key="1"/>
<evidence type="ECO:0000255" key="2">
    <source>
        <dbReference type="PROSITE-ProRule" id="PRU01004"/>
    </source>
</evidence>
<evidence type="ECO:0000305" key="3"/>
<reference key="1">
    <citation type="journal article" date="1994" name="DNA Res.">
        <title>Systematic sequencing of the 180 kilobase region of the Bacillus subtilis chromosome containing the replication origin.</title>
        <authorList>
            <person name="Ogasawara N."/>
            <person name="Nakai S."/>
            <person name="Yoshikawa H."/>
        </authorList>
    </citation>
    <scope>NUCLEOTIDE SEQUENCE [GENOMIC DNA]</scope>
    <source>
        <strain>168</strain>
    </source>
</reference>
<reference key="2">
    <citation type="journal article" date="1997" name="Nature">
        <title>The complete genome sequence of the Gram-positive bacterium Bacillus subtilis.</title>
        <authorList>
            <person name="Kunst F."/>
            <person name="Ogasawara N."/>
            <person name="Moszer I."/>
            <person name="Albertini A.M."/>
            <person name="Alloni G."/>
            <person name="Azevedo V."/>
            <person name="Bertero M.G."/>
            <person name="Bessieres P."/>
            <person name="Bolotin A."/>
            <person name="Borchert S."/>
            <person name="Borriss R."/>
            <person name="Boursier L."/>
            <person name="Brans A."/>
            <person name="Braun M."/>
            <person name="Brignell S.C."/>
            <person name="Bron S."/>
            <person name="Brouillet S."/>
            <person name="Bruschi C.V."/>
            <person name="Caldwell B."/>
            <person name="Capuano V."/>
            <person name="Carter N.M."/>
            <person name="Choi S.-K."/>
            <person name="Codani J.-J."/>
            <person name="Connerton I.F."/>
            <person name="Cummings N.J."/>
            <person name="Daniel R.A."/>
            <person name="Denizot F."/>
            <person name="Devine K.M."/>
            <person name="Duesterhoeft A."/>
            <person name="Ehrlich S.D."/>
            <person name="Emmerson P.T."/>
            <person name="Entian K.-D."/>
            <person name="Errington J."/>
            <person name="Fabret C."/>
            <person name="Ferrari E."/>
            <person name="Foulger D."/>
            <person name="Fritz C."/>
            <person name="Fujita M."/>
            <person name="Fujita Y."/>
            <person name="Fuma S."/>
            <person name="Galizzi A."/>
            <person name="Galleron N."/>
            <person name="Ghim S.-Y."/>
            <person name="Glaser P."/>
            <person name="Goffeau A."/>
            <person name="Golightly E.J."/>
            <person name="Grandi G."/>
            <person name="Guiseppi G."/>
            <person name="Guy B.J."/>
            <person name="Haga K."/>
            <person name="Haiech J."/>
            <person name="Harwood C.R."/>
            <person name="Henaut A."/>
            <person name="Hilbert H."/>
            <person name="Holsappel S."/>
            <person name="Hosono S."/>
            <person name="Hullo M.-F."/>
            <person name="Itaya M."/>
            <person name="Jones L.-M."/>
            <person name="Joris B."/>
            <person name="Karamata D."/>
            <person name="Kasahara Y."/>
            <person name="Klaerr-Blanchard M."/>
            <person name="Klein C."/>
            <person name="Kobayashi Y."/>
            <person name="Koetter P."/>
            <person name="Koningstein G."/>
            <person name="Krogh S."/>
            <person name="Kumano M."/>
            <person name="Kurita K."/>
            <person name="Lapidus A."/>
            <person name="Lardinois S."/>
            <person name="Lauber J."/>
            <person name="Lazarevic V."/>
            <person name="Lee S.-M."/>
            <person name="Levine A."/>
            <person name="Liu H."/>
            <person name="Masuda S."/>
            <person name="Mauel C."/>
            <person name="Medigue C."/>
            <person name="Medina N."/>
            <person name="Mellado R.P."/>
            <person name="Mizuno M."/>
            <person name="Moestl D."/>
            <person name="Nakai S."/>
            <person name="Noback M."/>
            <person name="Noone D."/>
            <person name="O'Reilly M."/>
            <person name="Ogawa K."/>
            <person name="Ogiwara A."/>
            <person name="Oudega B."/>
            <person name="Park S.-H."/>
            <person name="Parro V."/>
            <person name="Pohl T.M."/>
            <person name="Portetelle D."/>
            <person name="Porwollik S."/>
            <person name="Prescott A.M."/>
            <person name="Presecan E."/>
            <person name="Pujic P."/>
            <person name="Purnelle B."/>
            <person name="Rapoport G."/>
            <person name="Rey M."/>
            <person name="Reynolds S."/>
            <person name="Rieger M."/>
            <person name="Rivolta C."/>
            <person name="Rocha E."/>
            <person name="Roche B."/>
            <person name="Rose M."/>
            <person name="Sadaie Y."/>
            <person name="Sato T."/>
            <person name="Scanlan E."/>
            <person name="Schleich S."/>
            <person name="Schroeter R."/>
            <person name="Scoffone F."/>
            <person name="Sekiguchi J."/>
            <person name="Sekowska A."/>
            <person name="Seror S.J."/>
            <person name="Serror P."/>
            <person name="Shin B.-S."/>
            <person name="Soldo B."/>
            <person name="Sorokin A."/>
            <person name="Tacconi E."/>
            <person name="Takagi T."/>
            <person name="Takahashi H."/>
            <person name="Takemaru K."/>
            <person name="Takeuchi M."/>
            <person name="Tamakoshi A."/>
            <person name="Tanaka T."/>
            <person name="Terpstra P."/>
            <person name="Tognoni A."/>
            <person name="Tosato V."/>
            <person name="Uchiyama S."/>
            <person name="Vandenbol M."/>
            <person name="Vannier F."/>
            <person name="Vassarotti A."/>
            <person name="Viari A."/>
            <person name="Wambutt R."/>
            <person name="Wedler E."/>
            <person name="Wedler H."/>
            <person name="Weitzenegger T."/>
            <person name="Winters P."/>
            <person name="Wipat A."/>
            <person name="Yamamoto H."/>
            <person name="Yamane K."/>
            <person name="Yasumoto K."/>
            <person name="Yata K."/>
            <person name="Yoshida K."/>
            <person name="Yoshikawa H.-F."/>
            <person name="Zumstein E."/>
            <person name="Yoshikawa H."/>
            <person name="Danchin A."/>
        </authorList>
    </citation>
    <scope>NUCLEOTIDE SEQUENCE [LARGE SCALE GENOMIC DNA]</scope>
    <source>
        <strain>168</strain>
    </source>
</reference>
<reference key="3">
    <citation type="journal article" date="1992" name="Mol. Microbiol.">
        <title>Genes and their organization in the replication origin region of the bacterial chromosome.</title>
        <authorList>
            <person name="Ogasawara N."/>
            <person name="Yoshikawa H."/>
        </authorList>
    </citation>
    <scope>NUCLEOTIDE SEQUENCE [GENOMIC DNA] OF 1-425</scope>
    <source>
        <strain>168 / CRK2000</strain>
    </source>
</reference>
<keyword id="KW-0408">Iron</keyword>
<keyword id="KW-0411">Iron-sulfur</keyword>
<keyword id="KW-0479">Metal-binding</keyword>
<keyword id="KW-0500">Molybdenum</keyword>
<keyword id="KW-0560">Oxidoreductase</keyword>
<keyword id="KW-1185">Reference proteome</keyword>
<comment type="cofactor">
    <cofactor evidence="1">
        <name>Mo-bis(molybdopterin guanine dinucleotide)</name>
        <dbReference type="ChEBI" id="CHEBI:60539"/>
    </cofactor>
    <text evidence="1">Binds 1 molybdenum-bis(molybdopterin guanine dinucleotide) (Mo-bis-MGD) cofactor per subunit.</text>
</comment>
<comment type="similarity">
    <text evidence="3">Belongs to the prokaryotic molybdopterin-containing oxidoreductase family.</text>
</comment>
<sequence>MSKVHQSACPLNCWDSCGFLVTVDDGKVTKVDGDPNHPITEGKICGRGRMLETKTNSPDRLRYPMKKQNGEFVRISWEQALDEIADKLREIKETSETTAVLHSHDYANNGLLKALDQRFFNGYGGVTEIVGSICWGSGIEAQSWDFGRSYGHGPLDIYNSKHVVVWGRNVSRTNMHLYHHLQQVKKKGATITVIDPIFNPTAKLADRYISVKPGMDGWLAAAVLKVLIEMGRTDETFISEHSVGFDDVKELLKTVSLEEFIVKTETSMEELEYLAGLYADGPVSTFMGLGMQRYKNGGGTIRWIDALVAASGNVGIKGGGANFGNVQIGESFAKTKLTLPELKTTSRSFSMMTQAEEVLTAADPAIEMIIVTCGNPLTQVPNTNKVRQAFEKVPMTVAIDSIMTDTAELCDYVLPTATVFEEEDIYYSSMYHHYVQYGKKLVEPQGEAKSDSWIWSELAKRLGFGELFEYSTQEFLEMGLSSLEAEDVTLERLKEKGHLPLPVKQVPWDDYQFLTPSGKFEFTSSLAEQKGFSGSLQLNVPEESVFHNEELAGKYPYTLLSIHPQRSNHSQHVPFIEKLQHVQVDISPDIAAGQDLQDGDEVVIFNDRGSMKGKVKVMKQAHAKTINIDEGMWAAFGGSVNALTNDTNSDNGMGSTLFDCLVGLKKA</sequence>
<gene>
    <name type="primary">yyaE</name>
    <name type="ordered locus">BSU40930</name>
</gene>
<proteinExistence type="inferred from homology"/>
<organism>
    <name type="scientific">Bacillus subtilis (strain 168)</name>
    <dbReference type="NCBI Taxonomy" id="224308"/>
    <lineage>
        <taxon>Bacteria</taxon>
        <taxon>Bacillati</taxon>
        <taxon>Bacillota</taxon>
        <taxon>Bacilli</taxon>
        <taxon>Bacillales</taxon>
        <taxon>Bacillaceae</taxon>
        <taxon>Bacillus</taxon>
    </lineage>
</organism>
<dbReference type="EC" id="1.-.-.-"/>
<dbReference type="EMBL" id="D26185">
    <property type="protein sequence ID" value="BAA05223.1"/>
    <property type="molecule type" value="Genomic_DNA"/>
</dbReference>
<dbReference type="EMBL" id="AL009126">
    <property type="protein sequence ID" value="CAB16130.1"/>
    <property type="molecule type" value="Genomic_DNA"/>
</dbReference>
<dbReference type="EMBL" id="X62539">
    <property type="protein sequence ID" value="CAA44413.1"/>
    <property type="molecule type" value="Genomic_DNA"/>
</dbReference>
<dbReference type="PIR" id="S66017">
    <property type="entry name" value="S66017"/>
</dbReference>
<dbReference type="RefSeq" id="NP_391973.1">
    <property type="nucleotide sequence ID" value="NC_000964.3"/>
</dbReference>
<dbReference type="RefSeq" id="WP_003244290.1">
    <property type="nucleotide sequence ID" value="NZ_OZ025638.1"/>
</dbReference>
<dbReference type="SMR" id="P37519"/>
<dbReference type="FunCoup" id="P37519">
    <property type="interactions" value="341"/>
</dbReference>
<dbReference type="STRING" id="224308.BSU40930"/>
<dbReference type="PaxDb" id="224308-BSU40930"/>
<dbReference type="EnsemblBacteria" id="CAB16130">
    <property type="protein sequence ID" value="CAB16130"/>
    <property type="gene ID" value="BSU_40930"/>
</dbReference>
<dbReference type="GeneID" id="937914"/>
<dbReference type="KEGG" id="bsu:BSU40930"/>
<dbReference type="PATRIC" id="fig|224308.179.peg.4434"/>
<dbReference type="eggNOG" id="COG0243">
    <property type="taxonomic scope" value="Bacteria"/>
</dbReference>
<dbReference type="InParanoid" id="P37519"/>
<dbReference type="OrthoDB" id="9803192at2"/>
<dbReference type="PhylomeDB" id="P37519"/>
<dbReference type="BioCyc" id="BSUB:BSU40930-MONOMER"/>
<dbReference type="Proteomes" id="UP000001570">
    <property type="component" value="Chromosome"/>
</dbReference>
<dbReference type="GO" id="GO:0051536">
    <property type="term" value="F:iron-sulfur cluster binding"/>
    <property type="evidence" value="ECO:0007669"/>
    <property type="project" value="UniProtKB-KW"/>
</dbReference>
<dbReference type="GO" id="GO:0046872">
    <property type="term" value="F:metal ion binding"/>
    <property type="evidence" value="ECO:0007669"/>
    <property type="project" value="UniProtKB-KW"/>
</dbReference>
<dbReference type="GO" id="GO:0043546">
    <property type="term" value="F:molybdopterin cofactor binding"/>
    <property type="evidence" value="ECO:0007669"/>
    <property type="project" value="InterPro"/>
</dbReference>
<dbReference type="GO" id="GO:0016491">
    <property type="term" value="F:oxidoreductase activity"/>
    <property type="evidence" value="ECO:0007669"/>
    <property type="project" value="UniProtKB-KW"/>
</dbReference>
<dbReference type="CDD" id="cd02766">
    <property type="entry name" value="MopB_3"/>
    <property type="match status" value="1"/>
</dbReference>
<dbReference type="Gene3D" id="2.40.40.20">
    <property type="match status" value="1"/>
</dbReference>
<dbReference type="Gene3D" id="3.40.50.740">
    <property type="match status" value="1"/>
</dbReference>
<dbReference type="Gene3D" id="2.20.25.90">
    <property type="entry name" value="ADC-like domains"/>
    <property type="match status" value="1"/>
</dbReference>
<dbReference type="Gene3D" id="3.40.228.10">
    <property type="entry name" value="Dimethylsulfoxide Reductase, domain 2"/>
    <property type="match status" value="1"/>
</dbReference>
<dbReference type="Gene3D" id="3.30.2070.10">
    <property type="entry name" value="Formate dehydrogenase/DMSO reductase"/>
    <property type="match status" value="1"/>
</dbReference>
<dbReference type="InterPro" id="IPR009010">
    <property type="entry name" value="Asp_de-COase-like_dom_sf"/>
</dbReference>
<dbReference type="InterPro" id="IPR006657">
    <property type="entry name" value="MoPterin_dinucl-bd_dom"/>
</dbReference>
<dbReference type="InterPro" id="IPR006656">
    <property type="entry name" value="Mopterin_OxRdtase"/>
</dbReference>
<dbReference type="InterPro" id="IPR006963">
    <property type="entry name" value="Mopterin_OxRdtase_4Fe-4S_dom"/>
</dbReference>
<dbReference type="InterPro" id="IPR050612">
    <property type="entry name" value="Prok_Mopterin_Oxidored"/>
</dbReference>
<dbReference type="PANTHER" id="PTHR43742:SF6">
    <property type="entry name" value="OXIDOREDUCTASE YYAE-RELATED"/>
    <property type="match status" value="1"/>
</dbReference>
<dbReference type="PANTHER" id="PTHR43742">
    <property type="entry name" value="TRIMETHYLAMINE-N-OXIDE REDUCTASE"/>
    <property type="match status" value="1"/>
</dbReference>
<dbReference type="Pfam" id="PF04879">
    <property type="entry name" value="Molybdop_Fe4S4"/>
    <property type="match status" value="1"/>
</dbReference>
<dbReference type="Pfam" id="PF00384">
    <property type="entry name" value="Molybdopterin"/>
    <property type="match status" value="1"/>
</dbReference>
<dbReference type="Pfam" id="PF01568">
    <property type="entry name" value="Molydop_binding"/>
    <property type="match status" value="1"/>
</dbReference>
<dbReference type="SMART" id="SM00926">
    <property type="entry name" value="Molybdop_Fe4S4"/>
    <property type="match status" value="1"/>
</dbReference>
<dbReference type="SUPFAM" id="SSF50692">
    <property type="entry name" value="ADC-like"/>
    <property type="match status" value="1"/>
</dbReference>
<dbReference type="SUPFAM" id="SSF53706">
    <property type="entry name" value="Formate dehydrogenase/DMSO reductase, domains 1-3"/>
    <property type="match status" value="1"/>
</dbReference>
<dbReference type="PROSITE" id="PS51669">
    <property type="entry name" value="4FE4S_MOW_BIS_MGD"/>
    <property type="match status" value="1"/>
</dbReference>
<feature type="chain" id="PRO_0000050051" description="Probable oxidoreductase YyaE">
    <location>
        <begin position="1"/>
        <end position="667"/>
    </location>
</feature>
<feature type="domain" description="4Fe-4S Mo/W bis-MGD-type" evidence="2">
    <location>
        <begin position="2"/>
        <end position="59"/>
    </location>
</feature>
<feature type="binding site" evidence="2">
    <location>
        <position position="9"/>
    </location>
    <ligand>
        <name>[4Fe-4S] cluster</name>
        <dbReference type="ChEBI" id="CHEBI:49883"/>
    </ligand>
</feature>
<feature type="binding site" evidence="2">
    <location>
        <position position="13"/>
    </location>
    <ligand>
        <name>[4Fe-4S] cluster</name>
        <dbReference type="ChEBI" id="CHEBI:49883"/>
    </ligand>
</feature>
<feature type="binding site" evidence="2">
    <location>
        <position position="17"/>
    </location>
    <ligand>
        <name>[4Fe-4S] cluster</name>
        <dbReference type="ChEBI" id="CHEBI:49883"/>
    </ligand>
</feature>
<feature type="binding site" evidence="2">
    <location>
        <position position="45"/>
    </location>
    <ligand>
        <name>[4Fe-4S] cluster</name>
        <dbReference type="ChEBI" id="CHEBI:49883"/>
    </ligand>
</feature>